<sequence>MLRTTSRTFSRALSSSNFKINCGRRHWFSVLTLLEHQGGNLSPASLSAVEAAKRTGGDVFGFVIGKDSSQISQKVAKSVNDLKKVIYVENPSYEHNIPDQIANVLFENVKKNEISHVFSAHSTVGKGVMPRLAAMFDVMQISDIIGVVSADTFVRPTYAGNVNVTVSTKDPIKIVTVRASAFDAAPSSGEGAATVVEGIDPKPAALQEWVSENIIKNARPDLSSAERVVAGGRPLKDKETFERILTPLADKLGAAIGATRVAVDSGYADNSLQIGQTGKIIAPKLYIAVGIDGAIQHLAGIKDSKVIAAINRDENAPIFQTADVGIVGDLFEIVPELTEKL</sequence>
<keyword id="KW-0249">Electron transport</keyword>
<keyword id="KW-0274">FAD</keyword>
<keyword id="KW-0285">Flavoprotein</keyword>
<keyword id="KW-0496">Mitochondrion</keyword>
<keyword id="KW-1185">Reference proteome</keyword>
<keyword id="KW-0809">Transit peptide</keyword>
<keyword id="KW-0813">Transport</keyword>
<accession>P78790</accession>
<accession>O42660</accession>
<gene>
    <name type="ORF">SPAC27D7.06</name>
</gene>
<feature type="transit peptide" description="Mitochondrion" evidence="2">
    <location>
        <begin position="1"/>
        <end status="unknown"/>
    </location>
</feature>
<feature type="chain" id="PRO_0000008659" description="Probable electron transfer flavoprotein subunit alpha, mitochondrial">
    <location>
        <begin status="unknown"/>
        <end position="341"/>
    </location>
</feature>
<feature type="binding site" evidence="2">
    <location>
        <begin position="285"/>
        <end position="313"/>
    </location>
    <ligand>
        <name>FAD</name>
        <dbReference type="ChEBI" id="CHEBI:57692"/>
    </ligand>
</feature>
<feature type="sequence conflict" description="In Ref. 1; BAA13801." evidence="3" ref="1">
    <location>
        <position position="6"/>
    </location>
</feature>
<feature type="sequence conflict" description="In Ref. 1; BAA13801." evidence="3" ref="1">
    <original>A</original>
    <variation>P</variation>
    <location>
        <position position="76"/>
    </location>
</feature>
<feature type="sequence conflict" description="In Ref. 1; BAA13801." evidence="3" ref="1">
    <original>E</original>
    <variation>G</variation>
    <location>
        <position position="197"/>
    </location>
</feature>
<dbReference type="EMBL" id="D89139">
    <property type="protein sequence ID" value="BAA13801.1"/>
    <property type="status" value="ALT_INIT"/>
    <property type="molecule type" value="mRNA"/>
</dbReference>
<dbReference type="EMBL" id="CU329670">
    <property type="protein sequence ID" value="CAA15825.1"/>
    <property type="molecule type" value="Genomic_DNA"/>
</dbReference>
<dbReference type="PIR" id="T38439">
    <property type="entry name" value="T38439"/>
</dbReference>
<dbReference type="SMR" id="P78790"/>
<dbReference type="BioGRID" id="278552">
    <property type="interactions" value="14"/>
</dbReference>
<dbReference type="FunCoup" id="P78790">
    <property type="interactions" value="316"/>
</dbReference>
<dbReference type="STRING" id="284812.P78790"/>
<dbReference type="PaxDb" id="4896-SPAC27D7.06.1"/>
<dbReference type="EnsemblFungi" id="SPAC27D7.06.1">
    <property type="protein sequence ID" value="SPAC27D7.06.1:pep"/>
    <property type="gene ID" value="SPAC27D7.06"/>
</dbReference>
<dbReference type="KEGG" id="spo:2542075"/>
<dbReference type="PomBase" id="SPAC27D7.06"/>
<dbReference type="VEuPathDB" id="FungiDB:SPAC27D7.06"/>
<dbReference type="eggNOG" id="KOG3954">
    <property type="taxonomic scope" value="Eukaryota"/>
</dbReference>
<dbReference type="HOGENOM" id="CLU_034178_0_0_1"/>
<dbReference type="InParanoid" id="P78790"/>
<dbReference type="OMA" id="WRPYAEQ"/>
<dbReference type="PhylomeDB" id="P78790"/>
<dbReference type="Reactome" id="R-SPO-611105">
    <property type="pathway name" value="Respiratory electron transport"/>
</dbReference>
<dbReference type="PRO" id="PR:P78790"/>
<dbReference type="Proteomes" id="UP000002485">
    <property type="component" value="Chromosome I"/>
</dbReference>
<dbReference type="GO" id="GO:0005759">
    <property type="term" value="C:mitochondrial matrix"/>
    <property type="evidence" value="ECO:0000250"/>
    <property type="project" value="PomBase"/>
</dbReference>
<dbReference type="GO" id="GO:0005739">
    <property type="term" value="C:mitochondrion"/>
    <property type="evidence" value="ECO:0007005"/>
    <property type="project" value="PomBase"/>
</dbReference>
<dbReference type="GO" id="GO:0009055">
    <property type="term" value="F:electron transfer activity"/>
    <property type="evidence" value="ECO:0000318"/>
    <property type="project" value="GO_Central"/>
</dbReference>
<dbReference type="GO" id="GO:0050660">
    <property type="term" value="F:flavin adenine dinucleotide binding"/>
    <property type="evidence" value="ECO:0000318"/>
    <property type="project" value="GO_Central"/>
</dbReference>
<dbReference type="GO" id="GO:0033539">
    <property type="term" value="P:fatty acid beta-oxidation using acyl-CoA dehydrogenase"/>
    <property type="evidence" value="ECO:0000318"/>
    <property type="project" value="GO_Central"/>
</dbReference>
<dbReference type="CDD" id="cd01715">
    <property type="entry name" value="ETF_alpha"/>
    <property type="match status" value="1"/>
</dbReference>
<dbReference type="FunFam" id="3.40.50.1220:FF:000001">
    <property type="entry name" value="Electron transfer flavoprotein, alpha subunit"/>
    <property type="match status" value="1"/>
</dbReference>
<dbReference type="Gene3D" id="3.40.50.620">
    <property type="entry name" value="HUPs"/>
    <property type="match status" value="1"/>
</dbReference>
<dbReference type="Gene3D" id="3.40.50.1220">
    <property type="entry name" value="TPP-binding domain"/>
    <property type="match status" value="1"/>
</dbReference>
<dbReference type="InterPro" id="IPR029035">
    <property type="entry name" value="DHS-like_NAD/FAD-binding_dom"/>
</dbReference>
<dbReference type="InterPro" id="IPR014730">
    <property type="entry name" value="ETF_a/b_N"/>
</dbReference>
<dbReference type="InterPro" id="IPR001308">
    <property type="entry name" value="ETF_a/FixB"/>
</dbReference>
<dbReference type="InterPro" id="IPR033947">
    <property type="entry name" value="ETF_alpha_N"/>
</dbReference>
<dbReference type="InterPro" id="IPR014731">
    <property type="entry name" value="ETF_asu_C"/>
</dbReference>
<dbReference type="InterPro" id="IPR018206">
    <property type="entry name" value="ETF_asu_C_CS"/>
</dbReference>
<dbReference type="InterPro" id="IPR014729">
    <property type="entry name" value="Rossmann-like_a/b/a_fold"/>
</dbReference>
<dbReference type="PANTHER" id="PTHR43153">
    <property type="entry name" value="ELECTRON TRANSFER FLAVOPROTEIN ALPHA"/>
    <property type="match status" value="1"/>
</dbReference>
<dbReference type="PANTHER" id="PTHR43153:SF1">
    <property type="entry name" value="ELECTRON TRANSFER FLAVOPROTEIN SUBUNIT ALPHA, MITOCHONDRIAL"/>
    <property type="match status" value="1"/>
</dbReference>
<dbReference type="Pfam" id="PF01012">
    <property type="entry name" value="ETF"/>
    <property type="match status" value="1"/>
</dbReference>
<dbReference type="Pfam" id="PF00766">
    <property type="entry name" value="ETF_alpha"/>
    <property type="match status" value="1"/>
</dbReference>
<dbReference type="PIRSF" id="PIRSF000089">
    <property type="entry name" value="Electra_flavoP_a"/>
    <property type="match status" value="1"/>
</dbReference>
<dbReference type="SMART" id="SM00893">
    <property type="entry name" value="ETF"/>
    <property type="match status" value="1"/>
</dbReference>
<dbReference type="SUPFAM" id="SSF52402">
    <property type="entry name" value="Adenine nucleotide alpha hydrolases-like"/>
    <property type="match status" value="1"/>
</dbReference>
<dbReference type="SUPFAM" id="SSF52467">
    <property type="entry name" value="DHS-like NAD/FAD-binding domain"/>
    <property type="match status" value="1"/>
</dbReference>
<dbReference type="PROSITE" id="PS00696">
    <property type="entry name" value="ETF_ALPHA"/>
    <property type="match status" value="1"/>
</dbReference>
<evidence type="ECO:0000250" key="1"/>
<evidence type="ECO:0000255" key="2"/>
<evidence type="ECO:0000305" key="3"/>
<proteinExistence type="evidence at transcript level"/>
<protein>
    <recommendedName>
        <fullName>Probable electron transfer flavoprotein subunit alpha, mitochondrial</fullName>
        <shortName>Alpha-ETF</shortName>
    </recommendedName>
</protein>
<comment type="function">
    <text evidence="1">The electron transfer flavoprotein serves as a specific electron acceptor for several dehydrogenases, including five acyl-CoA dehydrogenases, glutaryl-CoA and sarcosine dehydrogenase. It transfers the electrons to the main mitochondrial respiratory chain via ETF-ubiquinone oxidoreductase (ETF dehydrogenase) (By similarity).</text>
</comment>
<comment type="cofactor">
    <cofactor evidence="1">
        <name>FAD</name>
        <dbReference type="ChEBI" id="CHEBI:57692"/>
    </cofactor>
    <text evidence="1">Binds 1 FAD per dimer.</text>
</comment>
<comment type="subunit">
    <text evidence="1">Heterodimer of an alpha and a beta subunit.</text>
</comment>
<comment type="subcellular location">
    <subcellularLocation>
        <location evidence="1">Mitochondrion matrix</location>
    </subcellularLocation>
</comment>
<comment type="similarity">
    <text evidence="3">Belongs to the ETF alpha-subunit/FixB family.</text>
</comment>
<comment type="sequence caution" evidence="3">
    <conflict type="erroneous initiation">
        <sequence resource="EMBL-CDS" id="BAA13801"/>
    </conflict>
    <text>Extended N-terminus.</text>
</comment>
<name>ETFA_SCHPO</name>
<organism>
    <name type="scientific">Schizosaccharomyces pombe (strain 972 / ATCC 24843)</name>
    <name type="common">Fission yeast</name>
    <dbReference type="NCBI Taxonomy" id="284812"/>
    <lineage>
        <taxon>Eukaryota</taxon>
        <taxon>Fungi</taxon>
        <taxon>Dikarya</taxon>
        <taxon>Ascomycota</taxon>
        <taxon>Taphrinomycotina</taxon>
        <taxon>Schizosaccharomycetes</taxon>
        <taxon>Schizosaccharomycetales</taxon>
        <taxon>Schizosaccharomycetaceae</taxon>
        <taxon>Schizosaccharomyces</taxon>
    </lineage>
</organism>
<reference key="1">
    <citation type="journal article" date="1997" name="DNA Res.">
        <title>Identification of open reading frames in Schizosaccharomyces pombe cDNAs.</title>
        <authorList>
            <person name="Yoshioka S."/>
            <person name="Kato K."/>
            <person name="Nakai K."/>
            <person name="Okayama H."/>
            <person name="Nojima H."/>
        </authorList>
    </citation>
    <scope>NUCLEOTIDE SEQUENCE [LARGE SCALE MRNA]</scope>
    <source>
        <strain>PR745</strain>
    </source>
</reference>
<reference key="2">
    <citation type="journal article" date="2002" name="Nature">
        <title>The genome sequence of Schizosaccharomyces pombe.</title>
        <authorList>
            <person name="Wood V."/>
            <person name="Gwilliam R."/>
            <person name="Rajandream M.A."/>
            <person name="Lyne M.H."/>
            <person name="Lyne R."/>
            <person name="Stewart A."/>
            <person name="Sgouros J.G."/>
            <person name="Peat N."/>
            <person name="Hayles J."/>
            <person name="Baker S.G."/>
            <person name="Basham D."/>
            <person name="Bowman S."/>
            <person name="Brooks K."/>
            <person name="Brown D."/>
            <person name="Brown S."/>
            <person name="Chillingworth T."/>
            <person name="Churcher C.M."/>
            <person name="Collins M."/>
            <person name="Connor R."/>
            <person name="Cronin A."/>
            <person name="Davis P."/>
            <person name="Feltwell T."/>
            <person name="Fraser A."/>
            <person name="Gentles S."/>
            <person name="Goble A."/>
            <person name="Hamlin N."/>
            <person name="Harris D.E."/>
            <person name="Hidalgo J."/>
            <person name="Hodgson G."/>
            <person name="Holroyd S."/>
            <person name="Hornsby T."/>
            <person name="Howarth S."/>
            <person name="Huckle E.J."/>
            <person name="Hunt S."/>
            <person name="Jagels K."/>
            <person name="James K.D."/>
            <person name="Jones L."/>
            <person name="Jones M."/>
            <person name="Leather S."/>
            <person name="McDonald S."/>
            <person name="McLean J."/>
            <person name="Mooney P."/>
            <person name="Moule S."/>
            <person name="Mungall K.L."/>
            <person name="Murphy L.D."/>
            <person name="Niblett D."/>
            <person name="Odell C."/>
            <person name="Oliver K."/>
            <person name="O'Neil S."/>
            <person name="Pearson D."/>
            <person name="Quail M.A."/>
            <person name="Rabbinowitsch E."/>
            <person name="Rutherford K.M."/>
            <person name="Rutter S."/>
            <person name="Saunders D."/>
            <person name="Seeger K."/>
            <person name="Sharp S."/>
            <person name="Skelton J."/>
            <person name="Simmonds M.N."/>
            <person name="Squares R."/>
            <person name="Squares S."/>
            <person name="Stevens K."/>
            <person name="Taylor K."/>
            <person name="Taylor R.G."/>
            <person name="Tivey A."/>
            <person name="Walsh S.V."/>
            <person name="Warren T."/>
            <person name="Whitehead S."/>
            <person name="Woodward J.R."/>
            <person name="Volckaert G."/>
            <person name="Aert R."/>
            <person name="Robben J."/>
            <person name="Grymonprez B."/>
            <person name="Weltjens I."/>
            <person name="Vanstreels E."/>
            <person name="Rieger M."/>
            <person name="Schaefer M."/>
            <person name="Mueller-Auer S."/>
            <person name="Gabel C."/>
            <person name="Fuchs M."/>
            <person name="Duesterhoeft A."/>
            <person name="Fritzc C."/>
            <person name="Holzer E."/>
            <person name="Moestl D."/>
            <person name="Hilbert H."/>
            <person name="Borzym K."/>
            <person name="Langer I."/>
            <person name="Beck A."/>
            <person name="Lehrach H."/>
            <person name="Reinhardt R."/>
            <person name="Pohl T.M."/>
            <person name="Eger P."/>
            <person name="Zimmermann W."/>
            <person name="Wedler H."/>
            <person name="Wambutt R."/>
            <person name="Purnelle B."/>
            <person name="Goffeau A."/>
            <person name="Cadieu E."/>
            <person name="Dreano S."/>
            <person name="Gloux S."/>
            <person name="Lelaure V."/>
            <person name="Mottier S."/>
            <person name="Galibert F."/>
            <person name="Aves S.J."/>
            <person name="Xiang Z."/>
            <person name="Hunt C."/>
            <person name="Moore K."/>
            <person name="Hurst S.M."/>
            <person name="Lucas M."/>
            <person name="Rochet M."/>
            <person name="Gaillardin C."/>
            <person name="Tallada V.A."/>
            <person name="Garzon A."/>
            <person name="Thode G."/>
            <person name="Daga R.R."/>
            <person name="Cruzado L."/>
            <person name="Jimenez J."/>
            <person name="Sanchez M."/>
            <person name="del Rey F."/>
            <person name="Benito J."/>
            <person name="Dominguez A."/>
            <person name="Revuelta J.L."/>
            <person name="Moreno S."/>
            <person name="Armstrong J."/>
            <person name="Forsburg S.L."/>
            <person name="Cerutti L."/>
            <person name="Lowe T."/>
            <person name="McCombie W.R."/>
            <person name="Paulsen I."/>
            <person name="Potashkin J."/>
            <person name="Shpakovski G.V."/>
            <person name="Ussery D."/>
            <person name="Barrell B.G."/>
            <person name="Nurse P."/>
        </authorList>
    </citation>
    <scope>NUCLEOTIDE SEQUENCE [LARGE SCALE GENOMIC DNA]</scope>
    <source>
        <strain>972 / ATCC 24843</strain>
    </source>
</reference>